<gene>
    <name evidence="1" type="primary">ubiB</name>
    <name type="ordered locus">VF_0048</name>
</gene>
<comment type="function">
    <text evidence="1">Is probably a protein kinase regulator of UbiI activity which is involved in aerobic coenzyme Q (ubiquinone) biosynthesis.</text>
</comment>
<comment type="pathway">
    <text>Cofactor biosynthesis; ubiquinone biosynthesis [regulation].</text>
</comment>
<comment type="subcellular location">
    <subcellularLocation>
        <location evidence="1">Cell inner membrane</location>
        <topology evidence="1">Single-pass membrane protein</topology>
    </subcellularLocation>
</comment>
<comment type="similarity">
    <text evidence="1">Belongs to the ABC1 family. UbiB subfamily.</text>
</comment>
<reference key="1">
    <citation type="journal article" date="2005" name="Proc. Natl. Acad. Sci. U.S.A.">
        <title>Complete genome sequence of Vibrio fischeri: a symbiotic bacterium with pathogenic congeners.</title>
        <authorList>
            <person name="Ruby E.G."/>
            <person name="Urbanowski M."/>
            <person name="Campbell J."/>
            <person name="Dunn A."/>
            <person name="Faini M."/>
            <person name="Gunsalus R."/>
            <person name="Lostroh P."/>
            <person name="Lupp C."/>
            <person name="McCann J."/>
            <person name="Millikan D."/>
            <person name="Schaefer A."/>
            <person name="Stabb E."/>
            <person name="Stevens A."/>
            <person name="Visick K."/>
            <person name="Whistler C."/>
            <person name="Greenberg E.P."/>
        </authorList>
    </citation>
    <scope>NUCLEOTIDE SEQUENCE [LARGE SCALE GENOMIC DNA]</scope>
    <source>
        <strain>ATCC 700601 / ES114</strain>
    </source>
</reference>
<keyword id="KW-0067">ATP-binding</keyword>
<keyword id="KW-0997">Cell inner membrane</keyword>
<keyword id="KW-1003">Cell membrane</keyword>
<keyword id="KW-0418">Kinase</keyword>
<keyword id="KW-0472">Membrane</keyword>
<keyword id="KW-0547">Nucleotide-binding</keyword>
<keyword id="KW-1185">Reference proteome</keyword>
<keyword id="KW-0808">Transferase</keyword>
<keyword id="KW-0812">Transmembrane</keyword>
<keyword id="KW-1133">Transmembrane helix</keyword>
<keyword id="KW-0831">Ubiquinone biosynthesis</keyword>
<accession>Q5E8V3</accession>
<dbReference type="EC" id="2.7.-.-" evidence="1"/>
<dbReference type="EMBL" id="CP000020">
    <property type="protein sequence ID" value="AAW84543.1"/>
    <property type="molecule type" value="Genomic_DNA"/>
</dbReference>
<dbReference type="RefSeq" id="WP_011260925.1">
    <property type="nucleotide sequence ID" value="NC_006840.2"/>
</dbReference>
<dbReference type="RefSeq" id="YP_203431.1">
    <property type="nucleotide sequence ID" value="NC_006840.2"/>
</dbReference>
<dbReference type="SMR" id="Q5E8V3"/>
<dbReference type="STRING" id="312309.VF_0048"/>
<dbReference type="EnsemblBacteria" id="AAW84543">
    <property type="protein sequence ID" value="AAW84543"/>
    <property type="gene ID" value="VF_0048"/>
</dbReference>
<dbReference type="GeneID" id="54162677"/>
<dbReference type="KEGG" id="vfi:VF_0048"/>
<dbReference type="PATRIC" id="fig|312309.11.peg.49"/>
<dbReference type="eggNOG" id="COG0661">
    <property type="taxonomic scope" value="Bacteria"/>
</dbReference>
<dbReference type="HOGENOM" id="CLU_006533_0_0_6"/>
<dbReference type="OrthoDB" id="9795390at2"/>
<dbReference type="UniPathway" id="UPA00232"/>
<dbReference type="Proteomes" id="UP000000537">
    <property type="component" value="Chromosome I"/>
</dbReference>
<dbReference type="GO" id="GO:0005886">
    <property type="term" value="C:plasma membrane"/>
    <property type="evidence" value="ECO:0007669"/>
    <property type="project" value="UniProtKB-SubCell"/>
</dbReference>
<dbReference type="GO" id="GO:0005524">
    <property type="term" value="F:ATP binding"/>
    <property type="evidence" value="ECO:0007669"/>
    <property type="project" value="UniProtKB-KW"/>
</dbReference>
<dbReference type="GO" id="GO:0004672">
    <property type="term" value="F:protein kinase activity"/>
    <property type="evidence" value="ECO:0007669"/>
    <property type="project" value="UniProtKB-UniRule"/>
</dbReference>
<dbReference type="GO" id="GO:0010795">
    <property type="term" value="P:regulation of ubiquinone biosynthetic process"/>
    <property type="evidence" value="ECO:0007669"/>
    <property type="project" value="UniProtKB-UniRule"/>
</dbReference>
<dbReference type="GO" id="GO:0006744">
    <property type="term" value="P:ubiquinone biosynthetic process"/>
    <property type="evidence" value="ECO:0007669"/>
    <property type="project" value="UniProtKB-UniPathway"/>
</dbReference>
<dbReference type="CDD" id="cd13972">
    <property type="entry name" value="UbiB"/>
    <property type="match status" value="1"/>
</dbReference>
<dbReference type="HAMAP" id="MF_00414">
    <property type="entry name" value="UbiB"/>
    <property type="match status" value="1"/>
</dbReference>
<dbReference type="InterPro" id="IPR004147">
    <property type="entry name" value="ABC1_dom"/>
</dbReference>
<dbReference type="InterPro" id="IPR011009">
    <property type="entry name" value="Kinase-like_dom_sf"/>
</dbReference>
<dbReference type="InterPro" id="IPR010232">
    <property type="entry name" value="UbiB"/>
</dbReference>
<dbReference type="InterPro" id="IPR045308">
    <property type="entry name" value="UbiB_bact"/>
</dbReference>
<dbReference type="InterPro" id="IPR050154">
    <property type="entry name" value="UbiB_kinase"/>
</dbReference>
<dbReference type="NCBIfam" id="NF003404">
    <property type="entry name" value="PRK04750.1"/>
    <property type="match status" value="1"/>
</dbReference>
<dbReference type="NCBIfam" id="TIGR01982">
    <property type="entry name" value="UbiB"/>
    <property type="match status" value="1"/>
</dbReference>
<dbReference type="PANTHER" id="PTHR10566">
    <property type="entry name" value="CHAPERONE-ACTIVITY OF BC1 COMPLEX CABC1 -RELATED"/>
    <property type="match status" value="1"/>
</dbReference>
<dbReference type="PANTHER" id="PTHR10566:SF113">
    <property type="entry name" value="PROTEIN ACTIVITY OF BC1 COMPLEX KINASE 7, CHLOROPLASTIC"/>
    <property type="match status" value="1"/>
</dbReference>
<dbReference type="Pfam" id="PF03109">
    <property type="entry name" value="ABC1"/>
    <property type="match status" value="1"/>
</dbReference>
<dbReference type="SUPFAM" id="SSF56112">
    <property type="entry name" value="Protein kinase-like (PK-like)"/>
    <property type="match status" value="1"/>
</dbReference>
<name>UBIB_ALIF1</name>
<protein>
    <recommendedName>
        <fullName evidence="1">Probable protein kinase UbiB</fullName>
        <ecNumber evidence="1">2.7.-.-</ecNumber>
    </recommendedName>
    <alternativeName>
        <fullName evidence="1">Ubiquinone biosynthesis protein UbiB</fullName>
    </alternativeName>
</protein>
<evidence type="ECO:0000255" key="1">
    <source>
        <dbReference type="HAMAP-Rule" id="MF_00414"/>
    </source>
</evidence>
<proteinExistence type="inferred from homology"/>
<feature type="chain" id="PRO_1000050069" description="Probable protein kinase UbiB">
    <location>
        <begin position="1"/>
        <end position="544"/>
    </location>
</feature>
<feature type="transmembrane region" description="Helical" evidence="1">
    <location>
        <begin position="515"/>
        <end position="537"/>
    </location>
</feature>
<feature type="domain" description="Protein kinase" evidence="1">
    <location>
        <begin position="123"/>
        <end position="501"/>
    </location>
</feature>
<feature type="active site" description="Proton acceptor" evidence="1">
    <location>
        <position position="287"/>
    </location>
</feature>
<feature type="binding site" evidence="1">
    <location>
        <begin position="129"/>
        <end position="137"/>
    </location>
    <ligand>
        <name>ATP</name>
        <dbReference type="ChEBI" id="CHEBI:30616"/>
    </ligand>
</feature>
<feature type="binding site" evidence="1">
    <location>
        <position position="152"/>
    </location>
    <ligand>
        <name>ATP</name>
        <dbReference type="ChEBI" id="CHEBI:30616"/>
    </ligand>
</feature>
<sequence>MTPSELKRLYHITKVQLEYGLDELLPEHALTQLPKRLRKGLFWIKNKYPEKTLGERLRLALQELGPVWIKFGQMMSTRRDLFPPHLADQLALLQDQVAPFDGQLAKDQMEMELGGPLDNWFTDFDIKPLASASIAQVHTAKLKDSGREIVLKVIRPDIRPVIESDIRLMYRMARLVEQHIPEARRLKPVKVIEEYEKTLLDELDLRREASNAMQLRRNFEGSEELYVPEVILDLSSEHLMVSERIYGIQVSDIEQLERNGTNMKLLAERGVSVFFTQVFRDSFFHADMHPGNVFVNPDNPENPQWIGLDCGIVGTLNKEDKRYLAENLLGFFNSDYHKVAQLHVDSGWVPADTNVEEFEFAIRMVCEPIFAKPLGEISFGHVLLNLFNTARRFNMEVQPQLVLLQKTLLYVEGLGRQLYPQLDLWATAKPFLETWMAKQVGPAAFVTALSEKAPFWAEKLPELPDLVYDSLRQGKVLNQRMDKLYAGYRQSKRQQAKGQFLFNVGATLLICSAVLLTSNITVLASISAATGAAFWLFSWRAYRR</sequence>
<organism>
    <name type="scientific">Aliivibrio fischeri (strain ATCC 700601 / ES114)</name>
    <name type="common">Vibrio fischeri</name>
    <dbReference type="NCBI Taxonomy" id="312309"/>
    <lineage>
        <taxon>Bacteria</taxon>
        <taxon>Pseudomonadati</taxon>
        <taxon>Pseudomonadota</taxon>
        <taxon>Gammaproteobacteria</taxon>
        <taxon>Vibrionales</taxon>
        <taxon>Vibrionaceae</taxon>
        <taxon>Aliivibrio</taxon>
    </lineage>
</organism>